<feature type="transit peptide" description="Chloroplast" evidence="1">
    <location>
        <begin position="1"/>
        <end position="69"/>
    </location>
</feature>
<feature type="chain" id="PRO_0000023287" description="Protochlorophyllide reductase A, chloroplastic">
    <location>
        <begin position="70"/>
        <end position="405"/>
    </location>
</feature>
<feature type="splice variant" id="VSP_046548" description="In isoform 2." evidence="8">
    <location>
        <begin position="1"/>
        <end position="121"/>
    </location>
</feature>
<feature type="sequence conflict" description="In Ref. 1; AAC49043." evidence="9" ref="1">
    <original>V</original>
    <variation>I</variation>
    <location>
        <position position="37"/>
    </location>
</feature>
<organism>
    <name type="scientific">Arabidopsis thaliana</name>
    <name type="common">Mouse-ear cress</name>
    <dbReference type="NCBI Taxonomy" id="3702"/>
    <lineage>
        <taxon>Eukaryota</taxon>
        <taxon>Viridiplantae</taxon>
        <taxon>Streptophyta</taxon>
        <taxon>Embryophyta</taxon>
        <taxon>Tracheophyta</taxon>
        <taxon>Spermatophyta</taxon>
        <taxon>Magnoliopsida</taxon>
        <taxon>eudicotyledons</taxon>
        <taxon>Gunneridae</taxon>
        <taxon>Pentapetalae</taxon>
        <taxon>rosids</taxon>
        <taxon>malvids</taxon>
        <taxon>Brassicales</taxon>
        <taxon>Brassicaceae</taxon>
        <taxon>Camelineae</taxon>
        <taxon>Arabidopsis</taxon>
    </lineage>
</organism>
<evidence type="ECO:0000255" key="1"/>
<evidence type="ECO:0000269" key="2">
    <source>
    </source>
</evidence>
<evidence type="ECO:0000269" key="3">
    <source>
    </source>
</evidence>
<evidence type="ECO:0000269" key="4">
    <source>
    </source>
</evidence>
<evidence type="ECO:0000269" key="5">
    <source>
    </source>
</evidence>
<evidence type="ECO:0000269" key="6">
    <source>
    </source>
</evidence>
<evidence type="ECO:0000269" key="7">
    <source>
    </source>
</evidence>
<evidence type="ECO:0000303" key="8">
    <source>
    </source>
</evidence>
<evidence type="ECO:0000305" key="9"/>
<evidence type="ECO:0000305" key="10">
    <source>
    </source>
</evidence>
<evidence type="ECO:0000305" key="11">
    <source>
    </source>
</evidence>
<name>PORA_ARATH</name>
<accession>Q42536</accession>
<accession>B9DGY6</accession>
<accession>Q9FK22</accession>
<proteinExistence type="evidence at protein level"/>
<protein>
    <recommendedName>
        <fullName>Protochlorophyllide reductase A, chloroplastic</fullName>
        <shortName>PCR A</shortName>
        <ecNumber evidence="11">1.3.1.33</ecNumber>
    </recommendedName>
    <alternativeName>
        <fullName>NADPH-protochlorophyllide oxidoreductase A</fullName>
        <shortName>POR A</shortName>
    </alternativeName>
</protein>
<sequence length="405" mass="43863">MALQAASLVSSAFSVRKDGKLNASASSSFKESSLFGVSLSEQSKADFVSSSLRCKREQSLRNNKAIIRAQAIATSTPSVTKSSLDRKKTLRKGNVVVTGASSGLGLATAKALAETGKWHVIMACRDFLKAERAAQSAGMPKDSYTVMHLDLASLDSVRQFVDNFRRAEMPLDVLVCNAAVYQPTANQPTFTAEGFELSVGINHLGHFLLSRLLIDDLKNSDYPSKRLIIVGSITGNTNTLAGNVPPKANLGDLRGLAGGLNGLNSSAMIDGGDFVGAKAYKDSKVCNMLTMQEFHRRFHEDTGITFASLYPGCIATTGLFREHIPLFRTLFPPFQKYITKGYVSESEAGKRLAQVVADPSLTKSGVYWSWNKTSASFENQLSQEASDVEKARRVWEVSEKLVGLA</sequence>
<dbReference type="EC" id="1.3.1.33" evidence="11"/>
<dbReference type="EMBL" id="U29699">
    <property type="protein sequence ID" value="AAC49043.1"/>
    <property type="molecule type" value="mRNA"/>
</dbReference>
<dbReference type="EMBL" id="AB013387">
    <property type="protein sequence ID" value="BAB11581.1"/>
    <property type="molecule type" value="Genomic_DNA"/>
</dbReference>
<dbReference type="EMBL" id="CP002688">
    <property type="protein sequence ID" value="AED96464.1"/>
    <property type="molecule type" value="Genomic_DNA"/>
</dbReference>
<dbReference type="EMBL" id="CP002688">
    <property type="protein sequence ID" value="AED96465.1"/>
    <property type="molecule type" value="Genomic_DNA"/>
</dbReference>
<dbReference type="EMBL" id="BT003853">
    <property type="protein sequence ID" value="AAO41903.1"/>
    <property type="molecule type" value="mRNA"/>
</dbReference>
<dbReference type="EMBL" id="BT005080">
    <property type="protein sequence ID" value="AAO50613.1"/>
    <property type="molecule type" value="mRNA"/>
</dbReference>
<dbReference type="EMBL" id="AK317329">
    <property type="protein sequence ID" value="BAH20003.1"/>
    <property type="molecule type" value="mRNA"/>
</dbReference>
<dbReference type="RefSeq" id="NP_001032072.1">
    <molecule id="Q42536-2"/>
    <property type="nucleotide sequence ID" value="NM_001036995.1"/>
</dbReference>
<dbReference type="RefSeq" id="NP_200230.1">
    <molecule id="Q42536-1"/>
    <property type="nucleotide sequence ID" value="NM_124799.4"/>
</dbReference>
<dbReference type="SMR" id="Q42536"/>
<dbReference type="BioGRID" id="20751">
    <property type="interactions" value="8"/>
</dbReference>
<dbReference type="FunCoup" id="Q42536">
    <property type="interactions" value="18"/>
</dbReference>
<dbReference type="IntAct" id="Q42536">
    <property type="interactions" value="2"/>
</dbReference>
<dbReference type="STRING" id="3702.Q42536"/>
<dbReference type="PaxDb" id="3702-AT5G54190.1"/>
<dbReference type="ProteomicsDB" id="249050">
    <molecule id="Q42536-1"/>
</dbReference>
<dbReference type="EnsemblPlants" id="AT5G54190.1">
    <molecule id="Q42536-1"/>
    <property type="protein sequence ID" value="AT5G54190.1"/>
    <property type="gene ID" value="AT5G54190"/>
</dbReference>
<dbReference type="EnsemblPlants" id="AT5G54190.2">
    <molecule id="Q42536-2"/>
    <property type="protein sequence ID" value="AT5G54190.2"/>
    <property type="gene ID" value="AT5G54190"/>
</dbReference>
<dbReference type="GeneID" id="835507"/>
<dbReference type="Gramene" id="AT5G54190.1">
    <molecule id="Q42536-1"/>
    <property type="protein sequence ID" value="AT5G54190.1"/>
    <property type="gene ID" value="AT5G54190"/>
</dbReference>
<dbReference type="Gramene" id="AT5G54190.2">
    <molecule id="Q42536-2"/>
    <property type="protein sequence ID" value="AT5G54190.2"/>
    <property type="gene ID" value="AT5G54190"/>
</dbReference>
<dbReference type="KEGG" id="ath:AT5G54190"/>
<dbReference type="Araport" id="AT5G54190"/>
<dbReference type="TAIR" id="AT5G54190">
    <property type="gene designation" value="PORA"/>
</dbReference>
<dbReference type="eggNOG" id="KOG1208">
    <property type="taxonomic scope" value="Eukaryota"/>
</dbReference>
<dbReference type="InParanoid" id="Q42536"/>
<dbReference type="PhylomeDB" id="Q42536"/>
<dbReference type="BioCyc" id="ARA:AT5G54190-MONOMER"/>
<dbReference type="BRENDA" id="1.3.1.33">
    <property type="organism ID" value="399"/>
</dbReference>
<dbReference type="BRENDA" id="1.3.7.7">
    <property type="organism ID" value="399"/>
</dbReference>
<dbReference type="UniPathway" id="UPA00668"/>
<dbReference type="PRO" id="PR:Q42536"/>
<dbReference type="Proteomes" id="UP000006548">
    <property type="component" value="Chromosome 5"/>
</dbReference>
<dbReference type="ExpressionAtlas" id="Q42536">
    <property type="expression patterns" value="baseline and differential"/>
</dbReference>
<dbReference type="GO" id="GO:0009507">
    <property type="term" value="C:chloroplast"/>
    <property type="evidence" value="ECO:0000303"/>
    <property type="project" value="TAIR"/>
</dbReference>
<dbReference type="GO" id="GO:0009941">
    <property type="term" value="C:chloroplast envelope"/>
    <property type="evidence" value="ECO:0007005"/>
    <property type="project" value="TAIR"/>
</dbReference>
<dbReference type="GO" id="GO:0009534">
    <property type="term" value="C:chloroplast thylakoid"/>
    <property type="evidence" value="ECO:0007005"/>
    <property type="project" value="TAIR"/>
</dbReference>
<dbReference type="GO" id="GO:0003729">
    <property type="term" value="F:mRNA binding"/>
    <property type="evidence" value="ECO:0000314"/>
    <property type="project" value="TAIR"/>
</dbReference>
<dbReference type="GO" id="GO:0016630">
    <property type="term" value="F:protochlorophyllide reductase activity"/>
    <property type="evidence" value="ECO:0000315"/>
    <property type="project" value="UniProtKB"/>
</dbReference>
<dbReference type="GO" id="GO:0015995">
    <property type="term" value="P:chlorophyll biosynthetic process"/>
    <property type="evidence" value="ECO:0007669"/>
    <property type="project" value="UniProtKB-UniPathway"/>
</dbReference>
<dbReference type="GO" id="GO:0009640">
    <property type="term" value="P:photomorphogenesis"/>
    <property type="evidence" value="ECO:0000315"/>
    <property type="project" value="UniProtKB"/>
</dbReference>
<dbReference type="GO" id="GO:0015979">
    <property type="term" value="P:photosynthesis"/>
    <property type="evidence" value="ECO:0007669"/>
    <property type="project" value="UniProtKB-KW"/>
</dbReference>
<dbReference type="GO" id="GO:0009723">
    <property type="term" value="P:response to ethylene"/>
    <property type="evidence" value="ECO:0000270"/>
    <property type="project" value="TAIR"/>
</dbReference>
<dbReference type="GO" id="GO:0009647">
    <property type="term" value="P:skotomorphogenesis"/>
    <property type="evidence" value="ECO:0000315"/>
    <property type="project" value="UniProtKB"/>
</dbReference>
<dbReference type="CDD" id="cd09810">
    <property type="entry name" value="LPOR_like_SDR_c_like"/>
    <property type="match status" value="1"/>
</dbReference>
<dbReference type="FunFam" id="3.40.50.720:FF:000454">
    <property type="entry name" value="NADPH-protochlorophyllide oxidoreductase"/>
    <property type="match status" value="1"/>
</dbReference>
<dbReference type="Gene3D" id="3.40.50.720">
    <property type="entry name" value="NAD(P)-binding Rossmann-like Domain"/>
    <property type="match status" value="1"/>
</dbReference>
<dbReference type="InterPro" id="IPR036291">
    <property type="entry name" value="NAD(P)-bd_dom_sf"/>
</dbReference>
<dbReference type="InterPro" id="IPR005979">
    <property type="entry name" value="Prochl_reduct"/>
</dbReference>
<dbReference type="InterPro" id="IPR002347">
    <property type="entry name" value="SDR_fam"/>
</dbReference>
<dbReference type="NCBIfam" id="TIGR01289">
    <property type="entry name" value="LPOR"/>
    <property type="match status" value="1"/>
</dbReference>
<dbReference type="PANTHER" id="PTHR44419:SF19">
    <property type="entry name" value="PROTOCHLOROPHYLLIDE REDUCTASE A, CHLOROPLASTIC"/>
    <property type="match status" value="1"/>
</dbReference>
<dbReference type="PANTHER" id="PTHR44419">
    <property type="entry name" value="PROTOCHLOROPHYLLIDE REDUCTASE C, CHLOROPLASTIC"/>
    <property type="match status" value="1"/>
</dbReference>
<dbReference type="Pfam" id="PF00106">
    <property type="entry name" value="adh_short"/>
    <property type="match status" value="1"/>
</dbReference>
<dbReference type="PRINTS" id="PR00081">
    <property type="entry name" value="GDHRDH"/>
</dbReference>
<dbReference type="SUPFAM" id="SSF51735">
    <property type="entry name" value="NAD(P)-binding Rossmann-fold domains"/>
    <property type="match status" value="1"/>
</dbReference>
<gene>
    <name type="primary">PORA</name>
    <name type="ordered locus">At5g54190</name>
    <name type="ORF">K18G13.7</name>
</gene>
<reference key="1">
    <citation type="journal article" date="1995" name="Plant Physiol.">
        <title>Identification of NADPH:protochlorophyllide oxidoreductases A and B: a branched pathway for light-dependent chlorophyll biosynthesis in Arabidopsis thaliana.</title>
        <authorList>
            <person name="Armstrong G.A."/>
            <person name="Runge S."/>
            <person name="Frick G."/>
            <person name="Sperling U."/>
            <person name="Apel K."/>
        </authorList>
    </citation>
    <scope>NUCLEOTIDE SEQUENCE [MRNA] (ISOFORM 1)</scope>
    <scope>DEVELOPMENTAL STAGE</scope>
    <scope>TISSUE SPECIFICITY</scope>
    <source>
        <strain>cv. Columbia</strain>
    </source>
</reference>
<reference key="2">
    <citation type="journal article" date="1998" name="DNA Res.">
        <title>Structural analysis of Arabidopsis thaliana chromosome 5. VI. Sequence features of the regions of 1,367,185 bp covered by 19 physically assigned P1 and TAC clones.</title>
        <authorList>
            <person name="Kotani H."/>
            <person name="Nakamura Y."/>
            <person name="Sato S."/>
            <person name="Asamizu E."/>
            <person name="Kaneko T."/>
            <person name="Miyajima N."/>
            <person name="Tabata S."/>
        </authorList>
    </citation>
    <scope>NUCLEOTIDE SEQUENCE [LARGE SCALE GENOMIC DNA]</scope>
    <source>
        <strain>cv. Columbia</strain>
    </source>
</reference>
<reference key="3">
    <citation type="journal article" date="2017" name="Plant J.">
        <title>Araport11: a complete reannotation of the Arabidopsis thaliana reference genome.</title>
        <authorList>
            <person name="Cheng C.Y."/>
            <person name="Krishnakumar V."/>
            <person name="Chan A.P."/>
            <person name="Thibaud-Nissen F."/>
            <person name="Schobel S."/>
            <person name="Town C.D."/>
        </authorList>
    </citation>
    <scope>GENOME REANNOTATION</scope>
    <source>
        <strain>cv. Columbia</strain>
    </source>
</reference>
<reference key="4">
    <citation type="journal article" date="2003" name="Science">
        <title>Empirical analysis of transcriptional activity in the Arabidopsis genome.</title>
        <authorList>
            <person name="Yamada K."/>
            <person name="Lim J."/>
            <person name="Dale J.M."/>
            <person name="Chen H."/>
            <person name="Shinn P."/>
            <person name="Palm C.J."/>
            <person name="Southwick A.M."/>
            <person name="Wu H.C."/>
            <person name="Kim C.J."/>
            <person name="Nguyen M."/>
            <person name="Pham P.K."/>
            <person name="Cheuk R.F."/>
            <person name="Karlin-Newmann G."/>
            <person name="Liu S.X."/>
            <person name="Lam B."/>
            <person name="Sakano H."/>
            <person name="Wu T."/>
            <person name="Yu G."/>
            <person name="Miranda M."/>
            <person name="Quach H.L."/>
            <person name="Tripp M."/>
            <person name="Chang C.H."/>
            <person name="Lee J.M."/>
            <person name="Toriumi M.J."/>
            <person name="Chan M.M."/>
            <person name="Tang C.C."/>
            <person name="Onodera C.S."/>
            <person name="Deng J.M."/>
            <person name="Akiyama K."/>
            <person name="Ansari Y."/>
            <person name="Arakawa T."/>
            <person name="Banh J."/>
            <person name="Banno F."/>
            <person name="Bowser L."/>
            <person name="Brooks S.Y."/>
            <person name="Carninci P."/>
            <person name="Chao Q."/>
            <person name="Choy N."/>
            <person name="Enju A."/>
            <person name="Goldsmith A.D."/>
            <person name="Gurjal M."/>
            <person name="Hansen N.F."/>
            <person name="Hayashizaki Y."/>
            <person name="Johnson-Hopson C."/>
            <person name="Hsuan V.W."/>
            <person name="Iida K."/>
            <person name="Karnes M."/>
            <person name="Khan S."/>
            <person name="Koesema E."/>
            <person name="Ishida J."/>
            <person name="Jiang P.X."/>
            <person name="Jones T."/>
            <person name="Kawai J."/>
            <person name="Kamiya A."/>
            <person name="Meyers C."/>
            <person name="Nakajima M."/>
            <person name="Narusaka M."/>
            <person name="Seki M."/>
            <person name="Sakurai T."/>
            <person name="Satou M."/>
            <person name="Tamse R."/>
            <person name="Vaysberg M."/>
            <person name="Wallender E.K."/>
            <person name="Wong C."/>
            <person name="Yamamura Y."/>
            <person name="Yuan S."/>
            <person name="Shinozaki K."/>
            <person name="Davis R.W."/>
            <person name="Theologis A."/>
            <person name="Ecker J.R."/>
        </authorList>
    </citation>
    <scope>NUCLEOTIDE SEQUENCE [LARGE SCALE MRNA] (ISOFORM 1)</scope>
    <source>
        <strain>cv. Columbia</strain>
    </source>
</reference>
<reference key="5">
    <citation type="journal article" date="2009" name="DNA Res.">
        <title>Analysis of multiple occurrences of alternative splicing events in Arabidopsis thaliana using novel sequenced full-length cDNAs.</title>
        <authorList>
            <person name="Iida K."/>
            <person name="Fukami-Kobayashi K."/>
            <person name="Toyoda A."/>
            <person name="Sakaki Y."/>
            <person name="Kobayashi M."/>
            <person name="Seki M."/>
            <person name="Shinozaki K."/>
        </authorList>
    </citation>
    <scope>NUCLEOTIDE SEQUENCE [LARGE SCALE MRNA] (ISOFORM 2)</scope>
    <source>
        <strain>cv. Columbia</strain>
    </source>
</reference>
<reference key="6">
    <citation type="journal article" date="2001" name="Plant Mol. Biol.">
        <title>POR C of Arabidopsis thaliana: a third light- and NADPH-dependent protochlorophyllide oxidoreductase that is differentially regulated by light.</title>
        <authorList>
            <person name="Su Q."/>
            <person name="Frick G."/>
            <person name="Armstrong G."/>
            <person name="Apel K."/>
        </authorList>
    </citation>
    <scope>FUNCTION</scope>
    <scope>INDUCTION BY LIGHT</scope>
    <scope>DEVELOPMENTAL STAGE</scope>
    <source>
        <strain>cv. Columbia</strain>
    </source>
</reference>
<reference key="7">
    <citation type="journal article" date="2005" name="Plant J.">
        <title>A role of Toc33 in the protochlorophyllide-dependent plastid import pathway of NADPH:protochlorophyllide oxidoreductase (POR) A.</title>
        <authorList>
            <person name="Reinbothe S."/>
            <person name="Pollmann S."/>
            <person name="Springer A."/>
            <person name="James R.J."/>
            <person name="Tichtinsky G."/>
            <person name="Reinbothe C."/>
        </authorList>
    </citation>
    <scope>INTERACTION WITH OP161 AND TOC33</scope>
</reference>
<reference key="8">
    <citation type="journal article" date="2005" name="Plant J.">
        <title>Multiplicity of different cell- and organ-specific import routes for the NADPH-protochlorophyllide oxidoreductases A and B in plastids of Arabidopsis seedlings.</title>
        <authorList>
            <person name="Kim C."/>
            <person name="Ham H."/>
            <person name="Apel K."/>
        </authorList>
    </citation>
    <scope>SUBCELLULAR LOCATION</scope>
</reference>
<reference key="9">
    <citation type="journal article" date="2010" name="Plant Mol. Biol.">
        <title>Arabidopsis protochlorophyllide oxidoreductase A (PORA) restores bulk chlorophyll synthesis and normal development to a porB porC double mutant.</title>
        <authorList>
            <person name="Paddock T.N."/>
            <person name="Mason M.E."/>
            <person name="Lima D.F."/>
            <person name="Armstrong G.A."/>
        </authorList>
    </citation>
    <scope>FUNCTION</scope>
</reference>
<reference key="10">
    <citation type="journal article" date="2012" name="Plant Mol. Biol.">
        <title>Arabidopsis light-dependent protochlorophyllide oxidoreductase A (PORA) is essential for normal plant growth and development.</title>
        <authorList>
            <person name="Paddock T."/>
            <person name="Lima D."/>
            <person name="Mason M.E."/>
            <person name="Apel K."/>
            <person name="Armstrong G.A."/>
        </authorList>
    </citation>
    <scope>FUNCTION</scope>
    <scope>CATALYTIC ACTIVITY</scope>
    <scope>DISRUPTION PHENOTYPE</scope>
</reference>
<reference key="11">
    <citation type="journal article" date="2015" name="Proc. Natl. Acad. Sci. U.S.A.">
        <title>Cell growth defect factor 1 is crucial for the plastid import of NADPH:protochlorophyllide oxidoreductase A in Arabidopsis thaliana.</title>
        <authorList>
            <person name="Reinbothe S."/>
            <person name="Gray J."/>
            <person name="Rustgi S."/>
            <person name="von Wettstein D."/>
            <person name="Reinbothe C."/>
        </authorList>
    </citation>
    <scope>INTERACTION WITH CPP1</scope>
</reference>
<keyword id="KW-0025">Alternative splicing</keyword>
<keyword id="KW-0149">Chlorophyll biosynthesis</keyword>
<keyword id="KW-0150">Chloroplast</keyword>
<keyword id="KW-0521">NADP</keyword>
<keyword id="KW-0560">Oxidoreductase</keyword>
<keyword id="KW-0602">Photosynthesis</keyword>
<keyword id="KW-0934">Plastid</keyword>
<keyword id="KW-1185">Reference proteome</keyword>
<keyword id="KW-0809">Transit peptide</keyword>
<comment type="function">
    <text evidence="2 4 5">Phototransformation of protochlorophyllide (Pchlide) to chlorophyllide (Chlide). PORA may also function as a photoprotectant during the transitory stage from dark to light. Functions in skotomorphogenesis, photomorphogenesis and throughout the plant life under specific light conditions.</text>
</comment>
<comment type="catalytic activity">
    <reaction evidence="11">
        <text>chlorophyllide a + NADP(+) = protochlorophyllide a + NADPH + H(+)</text>
        <dbReference type="Rhea" id="RHEA:11132"/>
        <dbReference type="ChEBI" id="CHEBI:15378"/>
        <dbReference type="ChEBI" id="CHEBI:57783"/>
        <dbReference type="ChEBI" id="CHEBI:58349"/>
        <dbReference type="ChEBI" id="CHEBI:83348"/>
        <dbReference type="ChEBI" id="CHEBI:83350"/>
        <dbReference type="EC" id="1.3.1.33"/>
    </reaction>
    <physiologicalReaction direction="right-to-left" evidence="11">
        <dbReference type="Rhea" id="RHEA:11134"/>
    </physiologicalReaction>
</comment>
<comment type="pathway">
    <text>Porphyrin-containing compound metabolism; chlorophyll biosynthesis.</text>
</comment>
<comment type="subunit">
    <text evidence="6">Forms large complexes including TOC33, pPORA and OEP161 during pPORA import into plastids at the plastid envelope membrane. Interacts with CPP1 during plastid import (PubMed:25901327).</text>
</comment>
<comment type="interaction">
    <interactant intactId="EBI-4424685">
        <id>Q42536</id>
    </interactant>
    <interactant intactId="EBI-963665">
        <id>Q8GXW1</id>
        <label>RGL2</label>
    </interactant>
    <organismsDiffer>false</organismsDiffer>
    <experiments>5</experiments>
</comment>
<comment type="interaction">
    <interactant intactId="EBI-4424685">
        <id>Q42536</id>
    </interactant>
    <interactant intactId="EBI-4424691">
        <id>Q93XX2</id>
        <label>SEOA</label>
    </interactant>
    <organismsDiffer>false</organismsDiffer>
    <experiments>4</experiments>
</comment>
<comment type="subcellular location">
    <subcellularLocation>
        <location evidence="3">Plastid</location>
        <location evidence="3">Chloroplast</location>
    </subcellularLocation>
</comment>
<comment type="alternative products">
    <event type="alternative splicing"/>
    <isoform>
        <id>Q42536-1</id>
        <name>1</name>
        <sequence type="displayed"/>
    </isoform>
    <isoform>
        <id>Q42536-2</id>
        <name>2</name>
        <sequence type="described" ref="VSP_046548"/>
    </isoform>
</comment>
<comment type="tissue specificity">
    <text evidence="7">Expressed in young seedlings. Not detected in leaves.</text>
</comment>
<comment type="developmental stage">
    <text evidence="2 7">Etiolated seedlings.</text>
</comment>
<comment type="induction">
    <text evidence="2">Down-regulated by light.</text>
</comment>
<comment type="disruption phenotype">
    <text evidence="5">Lethal under normal growth conditions and light-green stunted plants when grown in presence of sucrose.</text>
</comment>
<comment type="miscellaneous">
    <text evidence="10">The presence of TOC33 is not required for the import of PORA into plastids.</text>
</comment>
<comment type="similarity">
    <text evidence="9">Belongs to the short-chain dehydrogenases/reductases (SDR) family. POR subfamily.</text>
</comment>